<accession>P49186</accession>
<proteinExistence type="evidence at protein level"/>
<name>MK09_RAT</name>
<comment type="function">
    <text evidence="1 2">Serine/threonine-protein kinase involved in various processes such as cell proliferation, differentiation, migration, transformation and programmed cell death. Extracellular stimuli such as pro-inflammatory cytokines or physical stress stimulate the stress-activated protein kinase/c-Jun N-terminal kinase (SAP/JNK) signaling pathway. In this cascade, two dual specificity kinases MAP2K4/MKK4 and MAP2K7/MKK7 phosphorylate and activate MAPK9/JNK2. In turn, MAPK9/JNK2 phosphorylates a number of transcription factors, primarily components of AP-1 such as JUN and ATF2 and thus regulates AP-1 transcriptional activity. In response to oxidative or ribotoxic stresses, inhibits rRNA synthesis by phosphorylating and inactivating the RNA polymerase 1-specific transcription initiation factor RRN3. Promotes stressed cell apoptosis by phosphorylating key regulatory factors including TP53 and YAP1. In T-cells, MAPK8 and MAPK9 are required for polarized differentiation of T-helper cells into Th1 cells. Upon T-cell receptor (TCR) stimulation, is activated by CARMA1, BCL10, MAP2K7 and MAP3K7/TAK1 to regulate JUN protein levels. Plays an important role in the osmotic stress-induced epithelial tight-junctions disruption. When activated, promotes beta-catenin/CTNNB1 degradation and inhibits the canonical Wnt signaling pathway. Also participates in neurite growth in spiral ganglion neurons. Phosphorylates the CLOCK-BMAL1 heterodimer and plays a role in the regulation of the circadian clock (By similarity). Phosphorylates POU5F1, which results in the inhibition of POU5F1's transcriptional activity and enhances its proteasomal degradation (By similarity). Phosphorylates ALKBH5 in response to reactive oxygen species (ROS), promoting ALKBH5 sumoylation and inactivation (By similarity).</text>
</comment>
<comment type="catalytic activity">
    <reaction evidence="6">
        <text>L-seryl-[protein] + ATP = O-phospho-L-seryl-[protein] + ADP + H(+)</text>
        <dbReference type="Rhea" id="RHEA:17989"/>
        <dbReference type="Rhea" id="RHEA-COMP:9863"/>
        <dbReference type="Rhea" id="RHEA-COMP:11604"/>
        <dbReference type="ChEBI" id="CHEBI:15378"/>
        <dbReference type="ChEBI" id="CHEBI:29999"/>
        <dbReference type="ChEBI" id="CHEBI:30616"/>
        <dbReference type="ChEBI" id="CHEBI:83421"/>
        <dbReference type="ChEBI" id="CHEBI:456216"/>
        <dbReference type="EC" id="2.7.11.24"/>
    </reaction>
</comment>
<comment type="catalytic activity">
    <reaction evidence="6">
        <text>L-threonyl-[protein] + ATP = O-phospho-L-threonyl-[protein] + ADP + H(+)</text>
        <dbReference type="Rhea" id="RHEA:46608"/>
        <dbReference type="Rhea" id="RHEA-COMP:11060"/>
        <dbReference type="Rhea" id="RHEA-COMP:11605"/>
        <dbReference type="ChEBI" id="CHEBI:15378"/>
        <dbReference type="ChEBI" id="CHEBI:30013"/>
        <dbReference type="ChEBI" id="CHEBI:30616"/>
        <dbReference type="ChEBI" id="CHEBI:61977"/>
        <dbReference type="ChEBI" id="CHEBI:456216"/>
        <dbReference type="EC" id="2.7.11.24"/>
    </reaction>
</comment>
<comment type="cofactor">
    <cofactor evidence="1">
        <name>Mg(2+)</name>
        <dbReference type="ChEBI" id="CHEBI:18420"/>
    </cofactor>
</comment>
<comment type="activity regulation">
    <text evidence="1">Activated by threonine and tyrosine phosphorylation by either of two dual specificity kinases, MAP2K4 and MAP2K7. MAP2K4 shows a strong preference for Tyr-185 while MAP2K7 phosphorylates Tyr-183 preferentially. Inhibited by dual specificity phosphatases, such as DUSP1.</text>
</comment>
<comment type="subunit">
    <text evidence="1 2 6">Interacts with MECOM (PubMed:10856240). Binds to at least four scaffolding proteins, MAPK8IP1/JIP-1, MAPK8IP2/JIP-2, MAPK8IP3/JIP-3/JSAP1 and SPAG9/MAPK8IP4/JIP-4. These proteins also bind other components of the JNK signaling pathway (By similarity). Interacts with NFATC4 (By similarity). Interacts with ATF7; the interaction does not phosphorylate ATF7 but acts as a docking site for ATF7-associated partners such as JUN (By similarity). Interacts with BCL10 (By similarity). Interacts with CTNNB1 and GSK3B (By similarity). Interacts with DCLK2 (By similarity). Interacts with MAPKBP1 (By similarity). Interacts with POU5F1; phosphorylates POU5F1 at 'Ser-347'. Found in a complex with SH3RF1, RAC2, MAP3K7/TAK1, MAP2K7/MKK7, MAPK8IP1/JIP1 and MAPK8/JNK1 (By similarity).</text>
</comment>
<comment type="subcellular location">
    <subcellularLocation>
        <location evidence="1">Cytoplasm</location>
    </subcellularLocation>
    <subcellularLocation>
        <location evidence="2">Nucleus</location>
    </subcellularLocation>
    <text evidence="2">Colocalizes with POU5F1 in the nucleus.</text>
</comment>
<comment type="alternative products">
    <event type="alternative splicing"/>
    <isoform>
        <id>P49186-1</id>
        <name>Alpha-2</name>
        <sequence type="displayed"/>
    </isoform>
    <isoform>
        <id>P49186-2</id>
        <name>Alpha-1</name>
        <sequence type="described" ref="VSP_004838"/>
    </isoform>
</comment>
<comment type="domain">
    <text>The TXY motif contains the threonine and tyrosine residues whose phosphorylation activates the MAP kinases.</text>
</comment>
<comment type="PTM">
    <text evidence="1">Dually phosphorylated on Thr-183 and Tyr-185 by MAP2K7 and MAP2K4, which activates the enzyme. Autophosphorylated in vitro.</text>
</comment>
<comment type="similarity">
    <text evidence="8">Belongs to the protein kinase superfamily. CMGC Ser/Thr protein kinase family. MAP kinase subfamily.</text>
</comment>
<keyword id="KW-0025">Alternative splicing</keyword>
<keyword id="KW-0067">ATP-binding</keyword>
<keyword id="KW-0090">Biological rhythms</keyword>
<keyword id="KW-0963">Cytoplasm</keyword>
<keyword id="KW-0903">Direct protein sequencing</keyword>
<keyword id="KW-0418">Kinase</keyword>
<keyword id="KW-0547">Nucleotide-binding</keyword>
<keyword id="KW-0539">Nucleus</keyword>
<keyword id="KW-0597">Phosphoprotein</keyword>
<keyword id="KW-1185">Reference proteome</keyword>
<keyword id="KW-0723">Serine/threonine-protein kinase</keyword>
<keyword id="KW-0808">Transferase</keyword>
<sequence length="423" mass="48017">MSDSKSDGQFYSVQVADSTFTVLKRYQQLKPIGSGAQGIVCAAFDTVLGINVAVKKLSRPFQNQTHAKRAYRELVLLKCVNHKNIISLLNVFTPQKTLEEFQDVYLVMELMDANLCQVIHMELDHERMSYLLYQMLCGIKHLHSAGIIHRDLKPSNIVVKSDCTLKILDFGLARTACTNFMMTPYVVTRYYRAPEVILGMGYKENVDIWSVGCIMGELVKGCVIFQGTDHIDQWNKVIEQLGTPSAEFMKKLQPTVRNYVENRPKYPGIKFEELFPDWIFPSESERDKIKTSQARDLLSKMLVIDPDKRISVDEALRHPYITVWYDPAEAEAPPPQIYDAQLEEREHAIEEWKELIYKEVMDWEERSKNGVKDQPSDAAVSSKATPSQSSSINDISSMSTEHTLASDTDSSLDASTGPLEGCR</sequence>
<dbReference type="EC" id="2.7.11.24" evidence="6"/>
<dbReference type="EMBL" id="L27112">
    <property type="protein sequence ID" value="AAA42109.1"/>
    <property type="molecule type" value="mRNA"/>
</dbReference>
<dbReference type="EMBL" id="L27111">
    <property type="protein sequence ID" value="AAA42108.1"/>
    <property type="molecule type" value="mRNA"/>
</dbReference>
<dbReference type="PIR" id="S43968">
    <property type="entry name" value="S43968"/>
</dbReference>
<dbReference type="RefSeq" id="NP_001257473.1">
    <property type="nucleotide sequence ID" value="NM_001270544.1"/>
</dbReference>
<dbReference type="RefSeq" id="NP_059018.1">
    <molecule id="P49186-1"/>
    <property type="nucleotide sequence ID" value="NM_017322.2"/>
</dbReference>
<dbReference type="SMR" id="P49186"/>
<dbReference type="BioGRID" id="248408">
    <property type="interactions" value="1"/>
</dbReference>
<dbReference type="FunCoup" id="P49186">
    <property type="interactions" value="4668"/>
</dbReference>
<dbReference type="IntAct" id="P49186">
    <property type="interactions" value="2"/>
</dbReference>
<dbReference type="MINT" id="P49186"/>
<dbReference type="STRING" id="10116.ENSRNOP00000004010"/>
<dbReference type="GlyGen" id="P49186">
    <property type="glycosylation" value="1 site"/>
</dbReference>
<dbReference type="iPTMnet" id="P49186"/>
<dbReference type="PhosphoSitePlus" id="P49186"/>
<dbReference type="jPOST" id="P49186"/>
<dbReference type="PaxDb" id="10116-ENSRNOP00000003987"/>
<dbReference type="GeneID" id="50658"/>
<dbReference type="KEGG" id="rno:50658"/>
<dbReference type="UCSC" id="RGD:628847">
    <molecule id="P49186-1"/>
    <property type="organism name" value="rat"/>
</dbReference>
<dbReference type="AGR" id="RGD:628847"/>
<dbReference type="CTD" id="5601"/>
<dbReference type="RGD" id="628847">
    <property type="gene designation" value="Mapk9"/>
</dbReference>
<dbReference type="eggNOG" id="KOG0665">
    <property type="taxonomic scope" value="Eukaryota"/>
</dbReference>
<dbReference type="InParanoid" id="P49186"/>
<dbReference type="OrthoDB" id="24622at9989"/>
<dbReference type="PhylomeDB" id="P49186"/>
<dbReference type="BRENDA" id="2.7.11.24">
    <property type="organism ID" value="5301"/>
</dbReference>
<dbReference type="Reactome" id="R-RNO-2559580">
    <property type="pathway name" value="Oxidative Stress Induced Senescence"/>
</dbReference>
<dbReference type="Reactome" id="R-RNO-2871796">
    <property type="pathway name" value="FCERI mediated MAPK activation"/>
</dbReference>
<dbReference type="Reactome" id="R-RNO-450321">
    <property type="pathway name" value="JNK (c-Jun kinases) phosphorylation and activation mediated by activated human TAK1"/>
</dbReference>
<dbReference type="Reactome" id="R-RNO-450341">
    <property type="pathway name" value="Activation of the AP-1 family of transcription factors"/>
</dbReference>
<dbReference type="PRO" id="PR:P49186"/>
<dbReference type="Proteomes" id="UP000002494">
    <property type="component" value="Unplaced"/>
</dbReference>
<dbReference type="GO" id="GO:0005737">
    <property type="term" value="C:cytoplasm"/>
    <property type="evidence" value="ECO:0000266"/>
    <property type="project" value="RGD"/>
</dbReference>
<dbReference type="GO" id="GO:0005829">
    <property type="term" value="C:cytosol"/>
    <property type="evidence" value="ECO:0000314"/>
    <property type="project" value="MGI"/>
</dbReference>
<dbReference type="GO" id="GO:0005739">
    <property type="term" value="C:mitochondrion"/>
    <property type="evidence" value="ECO:0000266"/>
    <property type="project" value="RGD"/>
</dbReference>
<dbReference type="GO" id="GO:0005634">
    <property type="term" value="C:nucleus"/>
    <property type="evidence" value="ECO:0000318"/>
    <property type="project" value="GO_Central"/>
</dbReference>
<dbReference type="GO" id="GO:0043204">
    <property type="term" value="C:perikaryon"/>
    <property type="evidence" value="ECO:0000314"/>
    <property type="project" value="RGD"/>
</dbReference>
<dbReference type="GO" id="GO:0098685">
    <property type="term" value="C:Schaffer collateral - CA1 synapse"/>
    <property type="evidence" value="ECO:0000266"/>
    <property type="project" value="RGD"/>
</dbReference>
<dbReference type="GO" id="GO:0005524">
    <property type="term" value="F:ATP binding"/>
    <property type="evidence" value="ECO:0000314"/>
    <property type="project" value="RGD"/>
</dbReference>
<dbReference type="GO" id="GO:0004705">
    <property type="term" value="F:JUN kinase activity"/>
    <property type="evidence" value="ECO:0000314"/>
    <property type="project" value="RGD"/>
</dbReference>
<dbReference type="GO" id="GO:0031435">
    <property type="term" value="F:mitogen-activated protein kinase kinase kinase binding"/>
    <property type="evidence" value="ECO:0000353"/>
    <property type="project" value="RGD"/>
</dbReference>
<dbReference type="GO" id="GO:0004672">
    <property type="term" value="F:protein kinase activity"/>
    <property type="evidence" value="ECO:0000266"/>
    <property type="project" value="RGD"/>
</dbReference>
<dbReference type="GO" id="GO:0106310">
    <property type="term" value="F:protein serine kinase activity"/>
    <property type="evidence" value="ECO:0007669"/>
    <property type="project" value="RHEA"/>
</dbReference>
<dbReference type="GO" id="GO:0004674">
    <property type="term" value="F:protein serine/threonine kinase activity"/>
    <property type="evidence" value="ECO:0000266"/>
    <property type="project" value="RGD"/>
</dbReference>
<dbReference type="GO" id="GO:0004712">
    <property type="term" value="F:protein serine/threonine/tyrosine kinase activity"/>
    <property type="evidence" value="ECO:0000266"/>
    <property type="project" value="RGD"/>
</dbReference>
<dbReference type="GO" id="GO:0097190">
    <property type="term" value="P:apoptotic signaling pathway"/>
    <property type="evidence" value="ECO:0000266"/>
    <property type="project" value="RGD"/>
</dbReference>
<dbReference type="GO" id="GO:0071474">
    <property type="term" value="P:cellular hyperosmotic response"/>
    <property type="evidence" value="ECO:0000270"/>
    <property type="project" value="RGD"/>
</dbReference>
<dbReference type="GO" id="GO:1904646">
    <property type="term" value="P:cellular response to amyloid-beta"/>
    <property type="evidence" value="ECO:0000270"/>
    <property type="project" value="RGD"/>
</dbReference>
<dbReference type="GO" id="GO:0071363">
    <property type="term" value="P:cellular response to growth factor stimulus"/>
    <property type="evidence" value="ECO:0000270"/>
    <property type="project" value="RGD"/>
</dbReference>
<dbReference type="GO" id="GO:0071347">
    <property type="term" value="P:cellular response to interleukin-1"/>
    <property type="evidence" value="ECO:0000270"/>
    <property type="project" value="RGD"/>
</dbReference>
<dbReference type="GO" id="GO:0071222">
    <property type="term" value="P:cellular response to lipopolysaccharide"/>
    <property type="evidence" value="ECO:0000270"/>
    <property type="project" value="RGD"/>
</dbReference>
<dbReference type="GO" id="GO:0034614">
    <property type="term" value="P:cellular response to reactive oxygen species"/>
    <property type="evidence" value="ECO:0000266"/>
    <property type="project" value="RGD"/>
</dbReference>
<dbReference type="GO" id="GO:0071356">
    <property type="term" value="P:cellular response to tumor necrosis factor"/>
    <property type="evidence" value="ECO:0000270"/>
    <property type="project" value="RGD"/>
</dbReference>
<dbReference type="GO" id="GO:0034644">
    <property type="term" value="P:cellular response to UV"/>
    <property type="evidence" value="ECO:0000315"/>
    <property type="project" value="RGD"/>
</dbReference>
<dbReference type="GO" id="GO:0097191">
    <property type="term" value="P:extrinsic apoptotic signaling pathway"/>
    <property type="evidence" value="ECO:0000315"/>
    <property type="project" value="RGD"/>
</dbReference>
<dbReference type="GO" id="GO:0090594">
    <property type="term" value="P:inflammatory response to wounding"/>
    <property type="evidence" value="ECO:0000266"/>
    <property type="project" value="RGD"/>
</dbReference>
<dbReference type="GO" id="GO:0007254">
    <property type="term" value="P:JNK cascade"/>
    <property type="evidence" value="ECO:0000314"/>
    <property type="project" value="RGD"/>
</dbReference>
<dbReference type="GO" id="GO:0050804">
    <property type="term" value="P:modulation of chemical synaptic transmission"/>
    <property type="evidence" value="ECO:0000266"/>
    <property type="project" value="RGD"/>
</dbReference>
<dbReference type="GO" id="GO:0048666">
    <property type="term" value="P:neuron development"/>
    <property type="evidence" value="ECO:0000270"/>
    <property type="project" value="RGD"/>
</dbReference>
<dbReference type="GO" id="GO:0031175">
    <property type="term" value="P:neuron projection development"/>
    <property type="evidence" value="ECO:0000315"/>
    <property type="project" value="RGD"/>
</dbReference>
<dbReference type="GO" id="GO:0043065">
    <property type="term" value="P:positive regulation of apoptotic process"/>
    <property type="evidence" value="ECO:0000315"/>
    <property type="project" value="RGD"/>
</dbReference>
<dbReference type="GO" id="GO:2001235">
    <property type="term" value="P:positive regulation of apoptotic signaling pathway"/>
    <property type="evidence" value="ECO:0000266"/>
    <property type="project" value="RGD"/>
</dbReference>
<dbReference type="GO" id="GO:0045597">
    <property type="term" value="P:positive regulation of cell differentiation"/>
    <property type="evidence" value="ECO:0000315"/>
    <property type="project" value="RGD"/>
</dbReference>
<dbReference type="GO" id="GO:0032722">
    <property type="term" value="P:positive regulation of chemokine production"/>
    <property type="evidence" value="ECO:0000315"/>
    <property type="project" value="RGD"/>
</dbReference>
<dbReference type="GO" id="GO:1900017">
    <property type="term" value="P:positive regulation of cytokine production involved in inflammatory response"/>
    <property type="evidence" value="ECO:0000266"/>
    <property type="project" value="RGD"/>
</dbReference>
<dbReference type="GO" id="GO:0045893">
    <property type="term" value="P:positive regulation of DNA-templated transcription"/>
    <property type="evidence" value="ECO:0000315"/>
    <property type="project" value="RGD"/>
</dbReference>
<dbReference type="GO" id="GO:0010628">
    <property type="term" value="P:positive regulation of gene expression"/>
    <property type="evidence" value="ECO:0000266"/>
    <property type="project" value="RGD"/>
</dbReference>
<dbReference type="GO" id="GO:0010744">
    <property type="term" value="P:positive regulation of macrophage derived foam cell differentiation"/>
    <property type="evidence" value="ECO:0000266"/>
    <property type="project" value="RGD"/>
</dbReference>
<dbReference type="GO" id="GO:0071803">
    <property type="term" value="P:positive regulation of podosome assembly"/>
    <property type="evidence" value="ECO:0000266"/>
    <property type="project" value="RGD"/>
</dbReference>
<dbReference type="GO" id="GO:0031394">
    <property type="term" value="P:positive regulation of prostaglandin biosynthetic process"/>
    <property type="evidence" value="ECO:0000315"/>
    <property type="project" value="RGD"/>
</dbReference>
<dbReference type="GO" id="GO:0032308">
    <property type="term" value="P:positive regulation of prostaglandin secretion"/>
    <property type="evidence" value="ECO:0000315"/>
    <property type="project" value="RGD"/>
</dbReference>
<dbReference type="GO" id="GO:0032436">
    <property type="term" value="P:positive regulation of proteasomal ubiquitin-dependent protein catabolic process"/>
    <property type="evidence" value="ECO:0000266"/>
    <property type="project" value="RGD"/>
</dbReference>
<dbReference type="GO" id="GO:0031398">
    <property type="term" value="P:positive regulation of protein ubiquitination"/>
    <property type="evidence" value="ECO:0000266"/>
    <property type="project" value="RGD"/>
</dbReference>
<dbReference type="GO" id="GO:0061833">
    <property type="term" value="P:protein localization to tricellular tight junction"/>
    <property type="evidence" value="ECO:0000266"/>
    <property type="project" value="RGD"/>
</dbReference>
<dbReference type="GO" id="GO:0006626">
    <property type="term" value="P:protein targeting to mitochondrion"/>
    <property type="evidence" value="ECO:0000270"/>
    <property type="project" value="RGD"/>
</dbReference>
<dbReference type="GO" id="GO:0042752">
    <property type="term" value="P:regulation of circadian rhythm"/>
    <property type="evidence" value="ECO:0000250"/>
    <property type="project" value="UniProtKB"/>
</dbReference>
<dbReference type="GO" id="GO:0046328">
    <property type="term" value="P:regulation of JNK cascade"/>
    <property type="evidence" value="ECO:0000315"/>
    <property type="project" value="RGD"/>
</dbReference>
<dbReference type="GO" id="GO:0031396">
    <property type="term" value="P:regulation of protein ubiquitination"/>
    <property type="evidence" value="ECO:0000315"/>
    <property type="project" value="RGD"/>
</dbReference>
<dbReference type="GO" id="GO:0001836">
    <property type="term" value="P:release of cytochrome c from mitochondria"/>
    <property type="evidence" value="ECO:0000315"/>
    <property type="project" value="RGD"/>
</dbReference>
<dbReference type="GO" id="GO:0014075">
    <property type="term" value="P:response to amine"/>
    <property type="evidence" value="ECO:0000270"/>
    <property type="project" value="RGD"/>
</dbReference>
<dbReference type="GO" id="GO:0046686">
    <property type="term" value="P:response to cadmium ion"/>
    <property type="evidence" value="ECO:0000266"/>
    <property type="project" value="RGD"/>
</dbReference>
<dbReference type="GO" id="GO:0009612">
    <property type="term" value="P:response to mechanical stimulus"/>
    <property type="evidence" value="ECO:0000270"/>
    <property type="project" value="RGD"/>
</dbReference>
<dbReference type="GO" id="GO:1990089">
    <property type="term" value="P:response to nerve growth factor"/>
    <property type="evidence" value="ECO:0000270"/>
    <property type="project" value="RGD"/>
</dbReference>
<dbReference type="GO" id="GO:1904772">
    <property type="term" value="P:response to tetrachloromethane"/>
    <property type="evidence" value="ECO:0000270"/>
    <property type="project" value="RGD"/>
</dbReference>
<dbReference type="GO" id="GO:0009636">
    <property type="term" value="P:response to toxic substance"/>
    <property type="evidence" value="ECO:0000270"/>
    <property type="project" value="RGD"/>
</dbReference>
<dbReference type="GO" id="GO:0009410">
    <property type="term" value="P:response to xenobiotic stimulus"/>
    <property type="evidence" value="ECO:0000270"/>
    <property type="project" value="RGD"/>
</dbReference>
<dbReference type="GO" id="GO:0048511">
    <property type="term" value="P:rhythmic process"/>
    <property type="evidence" value="ECO:0007669"/>
    <property type="project" value="UniProtKB-KW"/>
</dbReference>
<dbReference type="CDD" id="cd07850">
    <property type="entry name" value="STKc_JNK"/>
    <property type="match status" value="1"/>
</dbReference>
<dbReference type="FunFam" id="1.10.510.10:FF:000009">
    <property type="entry name" value="Mitogen-activated protein kinase"/>
    <property type="match status" value="1"/>
</dbReference>
<dbReference type="FunFam" id="3.30.200.20:FF:000210">
    <property type="entry name" value="Mitogen-activated protein kinase"/>
    <property type="match status" value="1"/>
</dbReference>
<dbReference type="Gene3D" id="3.30.200.20">
    <property type="entry name" value="Phosphorylase Kinase, domain 1"/>
    <property type="match status" value="1"/>
</dbReference>
<dbReference type="Gene3D" id="1.10.510.10">
    <property type="entry name" value="Transferase(Phosphotransferase) domain 1"/>
    <property type="match status" value="1"/>
</dbReference>
<dbReference type="InterPro" id="IPR011009">
    <property type="entry name" value="Kinase-like_dom_sf"/>
</dbReference>
<dbReference type="InterPro" id="IPR050117">
    <property type="entry name" value="MAP_kinase"/>
</dbReference>
<dbReference type="InterPro" id="IPR003527">
    <property type="entry name" value="MAP_kinase_CS"/>
</dbReference>
<dbReference type="InterPro" id="IPR008351">
    <property type="entry name" value="MAPK_JNK"/>
</dbReference>
<dbReference type="InterPro" id="IPR000719">
    <property type="entry name" value="Prot_kinase_dom"/>
</dbReference>
<dbReference type="InterPro" id="IPR008271">
    <property type="entry name" value="Ser/Thr_kinase_AS"/>
</dbReference>
<dbReference type="PANTHER" id="PTHR24055">
    <property type="entry name" value="MITOGEN-ACTIVATED PROTEIN KINASE"/>
    <property type="match status" value="1"/>
</dbReference>
<dbReference type="Pfam" id="PF00069">
    <property type="entry name" value="Pkinase"/>
    <property type="match status" value="1"/>
</dbReference>
<dbReference type="PRINTS" id="PR01772">
    <property type="entry name" value="JNKMAPKINASE"/>
</dbReference>
<dbReference type="SMART" id="SM00220">
    <property type="entry name" value="S_TKc"/>
    <property type="match status" value="1"/>
</dbReference>
<dbReference type="SUPFAM" id="SSF56112">
    <property type="entry name" value="Protein kinase-like (PK-like)"/>
    <property type="match status" value="1"/>
</dbReference>
<dbReference type="PROSITE" id="PS01351">
    <property type="entry name" value="MAPK"/>
    <property type="match status" value="1"/>
</dbReference>
<dbReference type="PROSITE" id="PS50011">
    <property type="entry name" value="PROTEIN_KINASE_DOM"/>
    <property type="match status" value="1"/>
</dbReference>
<dbReference type="PROSITE" id="PS00108">
    <property type="entry name" value="PROTEIN_KINASE_ST"/>
    <property type="match status" value="1"/>
</dbReference>
<organism>
    <name type="scientific">Rattus norvegicus</name>
    <name type="common">Rat</name>
    <dbReference type="NCBI Taxonomy" id="10116"/>
    <lineage>
        <taxon>Eukaryota</taxon>
        <taxon>Metazoa</taxon>
        <taxon>Chordata</taxon>
        <taxon>Craniata</taxon>
        <taxon>Vertebrata</taxon>
        <taxon>Euteleostomi</taxon>
        <taxon>Mammalia</taxon>
        <taxon>Eutheria</taxon>
        <taxon>Euarchontoglires</taxon>
        <taxon>Glires</taxon>
        <taxon>Rodentia</taxon>
        <taxon>Myomorpha</taxon>
        <taxon>Muroidea</taxon>
        <taxon>Muridae</taxon>
        <taxon>Murinae</taxon>
        <taxon>Rattus</taxon>
    </lineage>
</organism>
<feature type="chain" id="PRO_0000186275" description="Mitogen-activated protein kinase 9">
    <location>
        <begin position="1"/>
        <end position="423"/>
    </location>
</feature>
<feature type="domain" description="Protein kinase" evidence="3">
    <location>
        <begin position="26"/>
        <end position="321"/>
    </location>
</feature>
<feature type="region of interest" description="Disordered" evidence="5">
    <location>
        <begin position="366"/>
        <end position="423"/>
    </location>
</feature>
<feature type="short sequence motif" description="TXY">
    <location>
        <begin position="183"/>
        <end position="185"/>
    </location>
</feature>
<feature type="compositionally biased region" description="Basic and acidic residues" evidence="5">
    <location>
        <begin position="366"/>
        <end position="375"/>
    </location>
</feature>
<feature type="compositionally biased region" description="Low complexity" evidence="5">
    <location>
        <begin position="387"/>
        <end position="416"/>
    </location>
</feature>
<feature type="active site" description="Proton acceptor" evidence="3 4">
    <location>
        <position position="151"/>
    </location>
</feature>
<feature type="binding site" evidence="3">
    <location>
        <begin position="32"/>
        <end position="40"/>
    </location>
    <ligand>
        <name>ATP</name>
        <dbReference type="ChEBI" id="CHEBI:30616"/>
    </ligand>
</feature>
<feature type="binding site" evidence="3">
    <location>
        <position position="55"/>
    </location>
    <ligand>
        <name>ATP</name>
        <dbReference type="ChEBI" id="CHEBI:30616"/>
    </ligand>
</feature>
<feature type="modified residue" description="Phosphothreonine; by MAP2K7" evidence="1">
    <location>
        <position position="183"/>
    </location>
</feature>
<feature type="modified residue" description="Phosphotyrosine; by MAP2K4" evidence="1">
    <location>
        <position position="185"/>
    </location>
</feature>
<feature type="splice variant" id="VSP_004838" description="In isoform Alpha-1." evidence="7">
    <original>GELVKGCVIFQGTDH</original>
    <variation>AEMVLHKSCSPGRDY</variation>
    <location>
        <begin position="216"/>
        <end position="230"/>
    </location>
</feature>
<reference key="1">
    <citation type="journal article" date="1994" name="Nature">
        <title>The stress-activated protein kinase subfamily of c-Jun kinases.</title>
        <authorList>
            <person name="Kyriakis J.M."/>
            <person name="Banerjee P."/>
            <person name="Nikolakaki E."/>
            <person name="Dai T."/>
            <person name="Rubie E.A."/>
            <person name="Ahmad M.F."/>
            <person name="Avruch J."/>
            <person name="Woodgett J.R."/>
        </authorList>
    </citation>
    <scope>NUCLEOTIDE SEQUENCE [MRNA] (ISOFORMS ALPHA-1 AND ALPHA-2)</scope>
    <scope>PARTIAL PROTEIN SEQUENCE</scope>
    <source>
        <tissue>Brain</tissue>
    </source>
</reference>
<reference key="2">
    <citation type="journal article" date="2000" name="EMBO J.">
        <title>The evi-1 oncoprotein inhibits c-Jun N-terminal kinase and prevents stress-induced cell death.</title>
        <authorList>
            <person name="Kurokawa M."/>
            <person name="Mitani K."/>
            <person name="Yamagata T."/>
            <person name="Takahashi T."/>
            <person name="Izutsu K."/>
            <person name="Ogawa S."/>
            <person name="Moriguchi T."/>
            <person name="Nishida E."/>
            <person name="Yazaki Y."/>
            <person name="Hirai H."/>
        </authorList>
    </citation>
    <scope>INTERACTION WITH MECOM</scope>
    <scope>CATALYTIC ACTIVITY</scope>
</reference>
<evidence type="ECO:0000250" key="1">
    <source>
        <dbReference type="UniProtKB" id="P45984"/>
    </source>
</evidence>
<evidence type="ECO:0000250" key="2">
    <source>
        <dbReference type="UniProtKB" id="Q9WTU6"/>
    </source>
</evidence>
<evidence type="ECO:0000255" key="3">
    <source>
        <dbReference type="PROSITE-ProRule" id="PRU00159"/>
    </source>
</evidence>
<evidence type="ECO:0000255" key="4">
    <source>
        <dbReference type="PROSITE-ProRule" id="PRU10027"/>
    </source>
</evidence>
<evidence type="ECO:0000256" key="5">
    <source>
        <dbReference type="SAM" id="MobiDB-lite"/>
    </source>
</evidence>
<evidence type="ECO:0000269" key="6">
    <source>
    </source>
</evidence>
<evidence type="ECO:0000303" key="7">
    <source>
    </source>
</evidence>
<evidence type="ECO:0000305" key="8"/>
<gene>
    <name type="primary">Mapk9</name>
    <name type="synonym">Jnk2</name>
    <name type="synonym">Prkm9</name>
</gene>
<protein>
    <recommendedName>
        <fullName>Mitogen-activated protein kinase 9</fullName>
        <shortName>MAP kinase 9</shortName>
        <shortName>MAPK 9</shortName>
        <ecNumber evidence="6">2.7.11.24</ecNumber>
    </recommendedName>
    <alternativeName>
        <fullName>SAPK-alpha</fullName>
    </alternativeName>
    <alternativeName>
        <fullName>Stress-activated protein kinase JNK2</fullName>
    </alternativeName>
    <alternativeName>
        <fullName>c-Jun N-terminal kinase 2</fullName>
    </alternativeName>
    <alternativeName>
        <fullName>p54-alpha</fullName>
    </alternativeName>
</protein>